<feature type="chain" id="PRO_1000050979" description="Glucokinase">
    <location>
        <begin position="1"/>
        <end position="323"/>
    </location>
</feature>
<feature type="binding site" evidence="1">
    <location>
        <begin position="8"/>
        <end position="13"/>
    </location>
    <ligand>
        <name>ATP</name>
        <dbReference type="ChEBI" id="CHEBI:30616"/>
    </ligand>
</feature>
<comment type="catalytic activity">
    <reaction evidence="1">
        <text>D-glucose + ATP = D-glucose 6-phosphate + ADP + H(+)</text>
        <dbReference type="Rhea" id="RHEA:17825"/>
        <dbReference type="ChEBI" id="CHEBI:4167"/>
        <dbReference type="ChEBI" id="CHEBI:15378"/>
        <dbReference type="ChEBI" id="CHEBI:30616"/>
        <dbReference type="ChEBI" id="CHEBI:61548"/>
        <dbReference type="ChEBI" id="CHEBI:456216"/>
        <dbReference type="EC" id="2.7.1.2"/>
    </reaction>
</comment>
<comment type="subcellular location">
    <subcellularLocation>
        <location evidence="1">Cytoplasm</location>
    </subcellularLocation>
</comment>
<comment type="similarity">
    <text evidence="1">Belongs to the bacterial glucokinase family.</text>
</comment>
<proteinExistence type="inferred from homology"/>
<sequence length="323" mass="34664">MTTYALVGDVGGTNARLALCAVATGEILQAKTYSGLEYESLEDVIKQYLSEHQAKVTDACIAIACPITGDWVAMTNHTWAFSIAAMQQNLGLDHLEVINDFTAVSMAIPVLPAQDVLQFGGTQPQPGKPVAVYGAGTGLGVAHLVNVDRRWISLAGEGGHVDFAPNSEEEDQILAVLRQELGHVSAERVLSGPGLVNLYRAIVISDARLPEKLAPKDITARALADSCTDCRRALSLFCVIMGRFGGNLALNLSTFGGVYIAGGIVPRFMEFFKASGFRAAFEDKGRFKDFLQDIPVYMITHPQPGLLGAGAYLRQKLGYELSS</sequence>
<reference key="1">
    <citation type="submission" date="2007-02" db="EMBL/GenBank/DDBJ databases">
        <title>Complete sequence of chromosome of Yersinia pestis Pestoides F.</title>
        <authorList>
            <consortium name="US DOE Joint Genome Institute"/>
            <person name="Copeland A."/>
            <person name="Lucas S."/>
            <person name="Lapidus A."/>
            <person name="Barry K."/>
            <person name="Detter J.C."/>
            <person name="Glavina del Rio T."/>
            <person name="Hammon N."/>
            <person name="Israni S."/>
            <person name="Dalin E."/>
            <person name="Tice H."/>
            <person name="Pitluck S."/>
            <person name="Di Bartolo G."/>
            <person name="Chain P."/>
            <person name="Malfatti S."/>
            <person name="Shin M."/>
            <person name="Vergez L."/>
            <person name="Schmutz J."/>
            <person name="Larimer F."/>
            <person name="Land M."/>
            <person name="Hauser L."/>
            <person name="Worsham P."/>
            <person name="Chu M."/>
            <person name="Bearden S."/>
            <person name="Garcia E."/>
            <person name="Richardson P."/>
        </authorList>
    </citation>
    <scope>NUCLEOTIDE SEQUENCE [LARGE SCALE GENOMIC DNA]</scope>
    <source>
        <strain>Pestoides F</strain>
    </source>
</reference>
<organism>
    <name type="scientific">Yersinia pestis (strain Pestoides F)</name>
    <dbReference type="NCBI Taxonomy" id="386656"/>
    <lineage>
        <taxon>Bacteria</taxon>
        <taxon>Pseudomonadati</taxon>
        <taxon>Pseudomonadota</taxon>
        <taxon>Gammaproteobacteria</taxon>
        <taxon>Enterobacterales</taxon>
        <taxon>Yersiniaceae</taxon>
        <taxon>Yersinia</taxon>
    </lineage>
</organism>
<dbReference type="EC" id="2.7.1.2" evidence="1"/>
<dbReference type="EMBL" id="CP000668">
    <property type="protein sequence ID" value="ABP40463.1"/>
    <property type="molecule type" value="Genomic_DNA"/>
</dbReference>
<dbReference type="RefSeq" id="WP_002211615.1">
    <property type="nucleotide sequence ID" value="NZ_CP009715.1"/>
</dbReference>
<dbReference type="SMR" id="A4TMF1"/>
<dbReference type="GeneID" id="57975727"/>
<dbReference type="KEGG" id="ypp:YPDSF_2084"/>
<dbReference type="PATRIC" id="fig|386656.14.peg.3560"/>
<dbReference type="GO" id="GO:0005829">
    <property type="term" value="C:cytosol"/>
    <property type="evidence" value="ECO:0007669"/>
    <property type="project" value="TreeGrafter"/>
</dbReference>
<dbReference type="GO" id="GO:0005524">
    <property type="term" value="F:ATP binding"/>
    <property type="evidence" value="ECO:0007669"/>
    <property type="project" value="UniProtKB-UniRule"/>
</dbReference>
<dbReference type="GO" id="GO:0005536">
    <property type="term" value="F:D-glucose binding"/>
    <property type="evidence" value="ECO:0007669"/>
    <property type="project" value="InterPro"/>
</dbReference>
<dbReference type="GO" id="GO:0004340">
    <property type="term" value="F:glucokinase activity"/>
    <property type="evidence" value="ECO:0007669"/>
    <property type="project" value="UniProtKB-UniRule"/>
</dbReference>
<dbReference type="GO" id="GO:0006096">
    <property type="term" value="P:glycolytic process"/>
    <property type="evidence" value="ECO:0007669"/>
    <property type="project" value="UniProtKB-UniRule"/>
</dbReference>
<dbReference type="CDD" id="cd24008">
    <property type="entry name" value="ASKHA_NBD_GLK"/>
    <property type="match status" value="1"/>
</dbReference>
<dbReference type="FunFam" id="3.30.420.40:FF:000045">
    <property type="entry name" value="Glucokinase"/>
    <property type="match status" value="1"/>
</dbReference>
<dbReference type="FunFam" id="3.40.367.20:FF:000002">
    <property type="entry name" value="Glucokinase"/>
    <property type="match status" value="1"/>
</dbReference>
<dbReference type="Gene3D" id="3.30.420.40">
    <property type="match status" value="1"/>
</dbReference>
<dbReference type="Gene3D" id="3.40.367.20">
    <property type="match status" value="1"/>
</dbReference>
<dbReference type="HAMAP" id="MF_00524">
    <property type="entry name" value="Glucokinase"/>
    <property type="match status" value="1"/>
</dbReference>
<dbReference type="InterPro" id="IPR043129">
    <property type="entry name" value="ATPase_NBD"/>
</dbReference>
<dbReference type="InterPro" id="IPR050201">
    <property type="entry name" value="Bacterial_glucokinase"/>
</dbReference>
<dbReference type="InterPro" id="IPR003836">
    <property type="entry name" value="Glucokinase"/>
</dbReference>
<dbReference type="NCBIfam" id="TIGR00749">
    <property type="entry name" value="glk"/>
    <property type="match status" value="1"/>
</dbReference>
<dbReference type="NCBIfam" id="NF001414">
    <property type="entry name" value="PRK00292.1-1"/>
    <property type="match status" value="1"/>
</dbReference>
<dbReference type="NCBIfam" id="NF001416">
    <property type="entry name" value="PRK00292.1-3"/>
    <property type="match status" value="1"/>
</dbReference>
<dbReference type="NCBIfam" id="NF009073">
    <property type="entry name" value="PRK12408.1"/>
    <property type="match status" value="1"/>
</dbReference>
<dbReference type="PANTHER" id="PTHR47690">
    <property type="entry name" value="GLUCOKINASE"/>
    <property type="match status" value="1"/>
</dbReference>
<dbReference type="PANTHER" id="PTHR47690:SF1">
    <property type="entry name" value="GLUCOKINASE"/>
    <property type="match status" value="1"/>
</dbReference>
<dbReference type="Pfam" id="PF02685">
    <property type="entry name" value="Glucokinase"/>
    <property type="match status" value="1"/>
</dbReference>
<dbReference type="SUPFAM" id="SSF53067">
    <property type="entry name" value="Actin-like ATPase domain"/>
    <property type="match status" value="1"/>
</dbReference>
<accession>A4TMF1</accession>
<gene>
    <name evidence="1" type="primary">glk</name>
    <name type="ordered locus">YPDSF_2084</name>
</gene>
<protein>
    <recommendedName>
        <fullName evidence="1">Glucokinase</fullName>
        <ecNumber evidence="1">2.7.1.2</ecNumber>
    </recommendedName>
    <alternativeName>
        <fullName evidence="1">Glucose kinase</fullName>
    </alternativeName>
</protein>
<keyword id="KW-0067">ATP-binding</keyword>
<keyword id="KW-0963">Cytoplasm</keyword>
<keyword id="KW-0324">Glycolysis</keyword>
<keyword id="KW-0418">Kinase</keyword>
<keyword id="KW-0547">Nucleotide-binding</keyword>
<keyword id="KW-0808">Transferase</keyword>
<evidence type="ECO:0000255" key="1">
    <source>
        <dbReference type="HAMAP-Rule" id="MF_00524"/>
    </source>
</evidence>
<name>GLK_YERPP</name>